<evidence type="ECO:0000255" key="1">
    <source>
        <dbReference type="HAMAP-Rule" id="MF_01365"/>
    </source>
</evidence>
<evidence type="ECO:0000305" key="2"/>
<reference key="1">
    <citation type="journal article" date="2007" name="J. Bacteriol.">
        <title>Genome sequence and analysis of the soil cellulolytic actinomycete Thermobifida fusca YX.</title>
        <authorList>
            <person name="Lykidis A."/>
            <person name="Mavromatis K."/>
            <person name="Ivanova N."/>
            <person name="Anderson I."/>
            <person name="Land M."/>
            <person name="DiBartolo G."/>
            <person name="Martinez M."/>
            <person name="Lapidus A."/>
            <person name="Lucas S."/>
            <person name="Copeland A."/>
            <person name="Richardson P."/>
            <person name="Wilson D.B."/>
            <person name="Kyrpides N."/>
        </authorList>
    </citation>
    <scope>NUCLEOTIDE SEQUENCE [LARGE SCALE GENOMIC DNA]</scope>
    <source>
        <strain>YX</strain>
    </source>
</reference>
<name>RL6_THEFY</name>
<dbReference type="EMBL" id="CP000088">
    <property type="protein sequence ID" value="AAZ56664.1"/>
    <property type="molecule type" value="Genomic_DNA"/>
</dbReference>
<dbReference type="RefSeq" id="WP_011293054.1">
    <property type="nucleotide sequence ID" value="NC_007333.1"/>
</dbReference>
<dbReference type="SMR" id="Q47LK8"/>
<dbReference type="STRING" id="269800.Tfu_2631"/>
<dbReference type="KEGG" id="tfu:Tfu_2631"/>
<dbReference type="eggNOG" id="COG0097">
    <property type="taxonomic scope" value="Bacteria"/>
</dbReference>
<dbReference type="HOGENOM" id="CLU_065464_1_2_11"/>
<dbReference type="OrthoDB" id="9805007at2"/>
<dbReference type="GO" id="GO:0022625">
    <property type="term" value="C:cytosolic large ribosomal subunit"/>
    <property type="evidence" value="ECO:0007669"/>
    <property type="project" value="TreeGrafter"/>
</dbReference>
<dbReference type="GO" id="GO:0019843">
    <property type="term" value="F:rRNA binding"/>
    <property type="evidence" value="ECO:0007669"/>
    <property type="project" value="UniProtKB-UniRule"/>
</dbReference>
<dbReference type="GO" id="GO:0003735">
    <property type="term" value="F:structural constituent of ribosome"/>
    <property type="evidence" value="ECO:0007669"/>
    <property type="project" value="InterPro"/>
</dbReference>
<dbReference type="GO" id="GO:0002181">
    <property type="term" value="P:cytoplasmic translation"/>
    <property type="evidence" value="ECO:0007669"/>
    <property type="project" value="TreeGrafter"/>
</dbReference>
<dbReference type="FunFam" id="3.90.930.12:FF:000001">
    <property type="entry name" value="50S ribosomal protein L6"/>
    <property type="match status" value="1"/>
</dbReference>
<dbReference type="FunFam" id="3.90.930.12:FF:000002">
    <property type="entry name" value="50S ribosomal protein L6"/>
    <property type="match status" value="1"/>
</dbReference>
<dbReference type="Gene3D" id="3.90.930.12">
    <property type="entry name" value="Ribosomal protein L6, alpha-beta domain"/>
    <property type="match status" value="2"/>
</dbReference>
<dbReference type="HAMAP" id="MF_01365_B">
    <property type="entry name" value="Ribosomal_uL6_B"/>
    <property type="match status" value="1"/>
</dbReference>
<dbReference type="InterPro" id="IPR000702">
    <property type="entry name" value="Ribosomal_uL6-like"/>
</dbReference>
<dbReference type="InterPro" id="IPR036789">
    <property type="entry name" value="Ribosomal_uL6-like_a/b-dom_sf"/>
</dbReference>
<dbReference type="InterPro" id="IPR020040">
    <property type="entry name" value="Ribosomal_uL6_a/b-dom"/>
</dbReference>
<dbReference type="InterPro" id="IPR019906">
    <property type="entry name" value="Ribosomal_uL6_bac-type"/>
</dbReference>
<dbReference type="InterPro" id="IPR002358">
    <property type="entry name" value="Ribosomal_uL6_CS"/>
</dbReference>
<dbReference type="NCBIfam" id="TIGR03654">
    <property type="entry name" value="L6_bact"/>
    <property type="match status" value="1"/>
</dbReference>
<dbReference type="PANTHER" id="PTHR11655">
    <property type="entry name" value="60S/50S RIBOSOMAL PROTEIN L6/L9"/>
    <property type="match status" value="1"/>
</dbReference>
<dbReference type="PANTHER" id="PTHR11655:SF14">
    <property type="entry name" value="LARGE RIBOSOMAL SUBUNIT PROTEIN UL6M"/>
    <property type="match status" value="1"/>
</dbReference>
<dbReference type="Pfam" id="PF00347">
    <property type="entry name" value="Ribosomal_L6"/>
    <property type="match status" value="2"/>
</dbReference>
<dbReference type="PIRSF" id="PIRSF002162">
    <property type="entry name" value="Ribosomal_L6"/>
    <property type="match status" value="1"/>
</dbReference>
<dbReference type="PRINTS" id="PR00059">
    <property type="entry name" value="RIBOSOMALL6"/>
</dbReference>
<dbReference type="SUPFAM" id="SSF56053">
    <property type="entry name" value="Ribosomal protein L6"/>
    <property type="match status" value="2"/>
</dbReference>
<dbReference type="PROSITE" id="PS00525">
    <property type="entry name" value="RIBOSOMAL_L6_1"/>
    <property type="match status" value="1"/>
</dbReference>
<protein>
    <recommendedName>
        <fullName evidence="1">Large ribosomal subunit protein uL6</fullName>
    </recommendedName>
    <alternativeName>
        <fullName evidence="2">50S ribosomal protein L6</fullName>
    </alternativeName>
</protein>
<comment type="function">
    <text evidence="1">This protein binds to the 23S rRNA, and is important in its secondary structure. It is located near the subunit interface in the base of the L7/L12 stalk, and near the tRNA binding site of the peptidyltransferase center.</text>
</comment>
<comment type="subunit">
    <text evidence="1">Part of the 50S ribosomal subunit.</text>
</comment>
<comment type="similarity">
    <text evidence="1">Belongs to the universal ribosomal protein uL6 family.</text>
</comment>
<sequence length="178" mass="19512">MSRIGRQPISVPKGVEVTIDGKDVKVKGPKGELKHTVPPSITVTLEDGQVKVSRADDRPQTRSLHGLTRSLIANLIEGTSKGYTKTLEISGVGYRVQAKGRNLEFSLGYSHPIVVEPPEGITFRVEKPTLLHVEGIDKQKVGQVAADIRSLRKPDPYKAKGIRYQGERIRRKAGKAGK</sequence>
<gene>
    <name evidence="1" type="primary">rplF</name>
    <name type="ordered locus">Tfu_2631</name>
</gene>
<organism>
    <name type="scientific">Thermobifida fusca (strain YX)</name>
    <dbReference type="NCBI Taxonomy" id="269800"/>
    <lineage>
        <taxon>Bacteria</taxon>
        <taxon>Bacillati</taxon>
        <taxon>Actinomycetota</taxon>
        <taxon>Actinomycetes</taxon>
        <taxon>Streptosporangiales</taxon>
        <taxon>Nocardiopsidaceae</taxon>
        <taxon>Thermobifida</taxon>
    </lineage>
</organism>
<feature type="chain" id="PRO_0000260968" description="Large ribosomal subunit protein uL6">
    <location>
        <begin position="1"/>
        <end position="178"/>
    </location>
</feature>
<keyword id="KW-0687">Ribonucleoprotein</keyword>
<keyword id="KW-0689">Ribosomal protein</keyword>
<keyword id="KW-0694">RNA-binding</keyword>
<keyword id="KW-0699">rRNA-binding</keyword>
<proteinExistence type="inferred from homology"/>
<accession>Q47LK8</accession>